<name>Y030_ARCFU</name>
<keyword id="KW-1185">Reference proteome</keyword>
<feature type="chain" id="PRO_0000127813" description="Uncharacterized protein AF_0030">
    <location>
        <begin position="1"/>
        <end position="49"/>
    </location>
</feature>
<accession>O30205</accession>
<dbReference type="EMBL" id="AE000782">
    <property type="protein sequence ID" value="AAB91216.1"/>
    <property type="molecule type" value="Genomic_DNA"/>
</dbReference>
<dbReference type="PIR" id="F69253">
    <property type="entry name" value="F69253"/>
</dbReference>
<dbReference type="PaxDb" id="224325-AF_0030"/>
<dbReference type="EnsemblBacteria" id="AAB91216">
    <property type="protein sequence ID" value="AAB91216"/>
    <property type="gene ID" value="AF_0030"/>
</dbReference>
<dbReference type="KEGG" id="afu:AF_0030"/>
<dbReference type="HOGENOM" id="CLU_3130638_0_0_2"/>
<dbReference type="Proteomes" id="UP000002199">
    <property type="component" value="Chromosome"/>
</dbReference>
<proteinExistence type="predicted"/>
<protein>
    <recommendedName>
        <fullName>Uncharacterized protein AF_0030</fullName>
    </recommendedName>
</protein>
<sequence length="49" mass="5557">MRDLLSKKDPKLLKEYIDSGKIRIEGVGIGNQIKIALAKIFGILSDFYF</sequence>
<reference key="1">
    <citation type="journal article" date="1997" name="Nature">
        <title>The complete genome sequence of the hyperthermophilic, sulphate-reducing archaeon Archaeoglobus fulgidus.</title>
        <authorList>
            <person name="Klenk H.-P."/>
            <person name="Clayton R.A."/>
            <person name="Tomb J.-F."/>
            <person name="White O."/>
            <person name="Nelson K.E."/>
            <person name="Ketchum K.A."/>
            <person name="Dodson R.J."/>
            <person name="Gwinn M.L."/>
            <person name="Hickey E.K."/>
            <person name="Peterson J.D."/>
            <person name="Richardson D.L."/>
            <person name="Kerlavage A.R."/>
            <person name="Graham D.E."/>
            <person name="Kyrpides N.C."/>
            <person name="Fleischmann R.D."/>
            <person name="Quackenbush J."/>
            <person name="Lee N.H."/>
            <person name="Sutton G.G."/>
            <person name="Gill S.R."/>
            <person name="Kirkness E.F."/>
            <person name="Dougherty B.A."/>
            <person name="McKenney K."/>
            <person name="Adams M.D."/>
            <person name="Loftus B.J."/>
            <person name="Peterson S.N."/>
            <person name="Reich C.I."/>
            <person name="McNeil L.K."/>
            <person name="Badger J.H."/>
            <person name="Glodek A."/>
            <person name="Zhou L."/>
            <person name="Overbeek R."/>
            <person name="Gocayne J.D."/>
            <person name="Weidman J.F."/>
            <person name="McDonald L.A."/>
            <person name="Utterback T.R."/>
            <person name="Cotton M.D."/>
            <person name="Spriggs T."/>
            <person name="Artiach P."/>
            <person name="Kaine B.P."/>
            <person name="Sykes S.M."/>
            <person name="Sadow P.W."/>
            <person name="D'Andrea K.P."/>
            <person name="Bowman C."/>
            <person name="Fujii C."/>
            <person name="Garland S.A."/>
            <person name="Mason T.M."/>
            <person name="Olsen G.J."/>
            <person name="Fraser C.M."/>
            <person name="Smith H.O."/>
            <person name="Woese C.R."/>
            <person name="Venter J.C."/>
        </authorList>
    </citation>
    <scope>NUCLEOTIDE SEQUENCE [LARGE SCALE GENOMIC DNA]</scope>
    <source>
        <strain>ATCC 49558 / DSM 4304 / JCM 9628 / NBRC 100126 / VC-16</strain>
    </source>
</reference>
<gene>
    <name type="ordered locus">AF_0030</name>
</gene>
<organism>
    <name type="scientific">Archaeoglobus fulgidus (strain ATCC 49558 / DSM 4304 / JCM 9628 / NBRC 100126 / VC-16)</name>
    <dbReference type="NCBI Taxonomy" id="224325"/>
    <lineage>
        <taxon>Archaea</taxon>
        <taxon>Methanobacteriati</taxon>
        <taxon>Methanobacteriota</taxon>
        <taxon>Archaeoglobi</taxon>
        <taxon>Archaeoglobales</taxon>
        <taxon>Archaeoglobaceae</taxon>
        <taxon>Archaeoglobus</taxon>
    </lineage>
</organism>